<accession>A0A125YS36</accession>
<protein>
    <recommendedName>
        <fullName>Vacuolar transporter chaperone complex subunit 2</fullName>
    </recommendedName>
    <alternativeName>
        <fullName>SPX-dependent polyphosphate polymerase VTC subunit 2</fullName>
    </alternativeName>
    <alternativeName>
        <fullName>Vacuolar membrane polyphosphate polymerase accessory subunit 2</fullName>
        <shortName>PolyP polymerase</shortName>
    </alternativeName>
</protein>
<feature type="chain" id="PRO_0000457146" description="Vacuolar transporter chaperone complex subunit 2">
    <location>
        <begin position="1"/>
        <end position="1308"/>
    </location>
</feature>
<feature type="topological domain" description="Cytoplasmic" evidence="6">
    <location>
        <begin position="1"/>
        <end position="1083"/>
    </location>
</feature>
<feature type="transmembrane region" description="Helical" evidence="2">
    <location>
        <begin position="1084"/>
        <end position="1104"/>
    </location>
</feature>
<feature type="topological domain" description="Vacuolar" evidence="6">
    <location>
        <begin position="1105"/>
        <end position="1110"/>
    </location>
</feature>
<feature type="transmembrane region" description="Helical" evidence="2">
    <location>
        <begin position="1111"/>
        <end position="1131"/>
    </location>
</feature>
<feature type="topological domain" description="Cytoplasmic" evidence="6">
    <location>
        <begin position="1132"/>
        <end position="1152"/>
    </location>
</feature>
<feature type="transmembrane region" description="Helical" evidence="2">
    <location>
        <begin position="1153"/>
        <end position="1173"/>
    </location>
</feature>
<feature type="topological domain" description="Vacuolar" evidence="6">
    <location>
        <begin position="1174"/>
        <end position="1308"/>
    </location>
</feature>
<feature type="domain" description="SPX" evidence="3">
    <location>
        <begin position="1"/>
        <end position="284"/>
    </location>
</feature>
<feature type="region of interest" description="Disordered" evidence="4">
    <location>
        <begin position="144"/>
        <end position="220"/>
    </location>
</feature>
<feature type="region of interest" description="Important for inositol polyphosphate binding" evidence="1">
    <location>
        <begin position="265"/>
        <end position="272"/>
    </location>
</feature>
<feature type="region of interest" description="Disordered" evidence="4">
    <location>
        <begin position="321"/>
        <end position="384"/>
    </location>
</feature>
<feature type="region of interest" description="Disordered" evidence="4">
    <location>
        <begin position="611"/>
        <end position="645"/>
    </location>
</feature>
<feature type="region of interest" description="Disordered" evidence="4">
    <location>
        <begin position="846"/>
        <end position="890"/>
    </location>
</feature>
<feature type="region of interest" description="Disordered" evidence="4">
    <location>
        <begin position="915"/>
        <end position="946"/>
    </location>
</feature>
<feature type="region of interest" description="Disordered" evidence="4">
    <location>
        <begin position="981"/>
        <end position="1004"/>
    </location>
</feature>
<feature type="compositionally biased region" description="Basic and acidic residues" evidence="4">
    <location>
        <begin position="197"/>
        <end position="209"/>
    </location>
</feature>
<feature type="compositionally biased region" description="Basic and acidic residues" evidence="4">
    <location>
        <begin position="332"/>
        <end position="344"/>
    </location>
</feature>
<feature type="compositionally biased region" description="Gly residues" evidence="4">
    <location>
        <begin position="632"/>
        <end position="641"/>
    </location>
</feature>
<feature type="compositionally biased region" description="Basic and acidic residues" evidence="4">
    <location>
        <begin position="848"/>
        <end position="857"/>
    </location>
</feature>
<feature type="compositionally biased region" description="Polar residues" evidence="4">
    <location>
        <begin position="859"/>
        <end position="871"/>
    </location>
</feature>
<feature type="compositionally biased region" description="Polar residues" evidence="4">
    <location>
        <begin position="915"/>
        <end position="938"/>
    </location>
</feature>
<feature type="site" description="Important for inositol polyphosphate binding" evidence="1">
    <location>
        <position position="22"/>
    </location>
</feature>
<feature type="site" description="Important for inositol polyphosphate binding" evidence="1">
    <location>
        <position position="26"/>
    </location>
</feature>
<sequence>MKFSKQLSAQADLRYLNEYISYKDLKKAIKVITGSDVQVCTVQDVVSNFRQTNALTGSIFRPPESRFQELLNHELDKINSFSKREVEAILDQLAVALVIMWRLHAALTLLRLAPDSPGYAEAQALLKRLEQREQEIRNALVVYPQKRGRATEQDKAGSPSSNPRCRGVSDEPSSSSEERELGAEGDDFSSAGGKTSSRGEGDAKRRQGDEDGGEGEQDDAKRSVAEALILLEKDVLEVEGVLEAQSQEIVFLDSFVRLNFTGFRKITKKYDKHNQSSAASWYMSRVVRQDFMNLNFTLLLTRLARCYVALRSLRRRLGEQQQQSLSISPADDPSKAASVKEDRSTVGSFSQSLGPEGARLSTYKRTGGSDEGEQRREPRFSLAARSRGSRDCREDIKVTKYLIAPDELMKVKVLILKHLPLLAAGGIPMDDSVLCPFENSSQAVAAEDFSAALEAAASLLRTSGTASDKREARQSLGGSRVPTWEVYLDNEEFTYYTNTRTRRDSPDSCRGVAPSRRVVRVRWQGLPSLNSAGRQVALELSRPDSSIADPQEDITTPLASNAPDVASSAFTVILRQKQLLQLLHGLITPSKLLDQLMDEMEASAAGVATGEGANATAASHRTGARGAANRGEGSGGGGGNRGSDDRAVALTKQKRKADMLQVLQTVWDAVQQRGVSPSVRTWFYRTEFMSEDGVAWISVDEDIRFSREMNRTPPANQWIRSETEALSTDDVHPFPWGLLDVSFLVRDNGVALPQHAVQQAKDFHPLVGRDDLEDFVADLRGLSTLTEVPGFSLFAHGTAYFYTPRLQALQARMSGYEQAVHLIPLWLQYTTNAEFDDDASQVFDEATEGGKGKKADRTSVGQSRLGRNQGDSAERGQRAGSPGGLSRPRVCHRGSVIDVVHQGTSASLVHDLQASAQVSPPTSSGVDQLGNSHRPSVSESRHPSAPALSVLASAPSLPMPAPPLLEVSPFQSGARGLLTQPLLDDGDRMAGERQSASRGGAPTPSQSWLLTGARYWRRYCNCFSLSGSAGRRRRSMSCLFPWSQRSSARRIHPVGPRSMVAGGVTSGPSVRVEPKTFFANERTLLQWMNTAVLIATISITLMNFGNPVGRIAGLLMSPVAVFFIGYSFWVYLRRARALERKEPIAYNDKLGPSILVVTLMLSLSAVIALNLLYHEGEAQLPITPQNSSTSTAPSLPPSPHALPLLSQLNVSHSQAAYKAPSAPNATVNAGGYSVADVPAPDFSLSHPATAYAAATALAAAEAAAAAGPVSFAGAPERAVHAHVTEAMTHAASAETAAAEGARVTAGAK</sequence>
<keyword id="KW-0472">Membrane</keyword>
<keyword id="KW-1185">Reference proteome</keyword>
<keyword id="KW-0812">Transmembrane</keyword>
<keyword id="KW-1133">Transmembrane helix</keyword>
<keyword id="KW-0926">Vacuole</keyword>
<proteinExistence type="inferred from homology"/>
<comment type="function">
    <text evidence="1">Accessory subunit of the vacuolar transporter chaperone (VTC) complex. The VTC complex acts as a vacuolar polyphosphate polymerase that catalyzes the synthesis of inorganic polyphosphate (polyP) via transfer of phosphate from ATP to a growing polyP chain, releasing ADP. VTC exposes its catalytic domain vtc4 to the cytosol, where the growing polyP chain winds through a tunnel-shaped pocket, integrating cytoplasmic polymer synthesis with polyP membrane translocation. The VTC complex carries 9 vacuolar transmembrane domains, which are likely to constitute the translocation channel into the organelle lumen. PolyP synthesis is tightly coupled to its transport into the vacuole lumen, in order to avoid otherwise toxic intermediates in the cytosol, and it depends on the proton gradient across the membrane, formed by V-ATPase. The VTC complex also plays a role in vacuolar membrane fusion.</text>
</comment>
<comment type="subunit">
    <text evidence="1">The VTC core complex is an integral membrane heterooligomer composed of at least the catalytic subunit vtc4 and the accessory subunits vtc1 and vtc2. vtc1 is a small membrane protein without hydrophilic domain. Vtc2 and vtc4 are related and have 2 hydrophilic domains that face the cytosol, an N-terminal SPX domain and the central core domain. The central core in vtc4 is the catalytic domain.</text>
</comment>
<comment type="subcellular location">
    <subcellularLocation>
        <location evidence="1">Vacuole membrane</location>
        <topology evidence="2">Multi-pass membrane protein</topology>
    </subcellularLocation>
    <text evidence="5">Expressed in punctate spots within the cytoplasm of both intracellular and extracellular tachyzoites.</text>
</comment>
<comment type="domain">
    <text evidence="1">The SPX domain has very high affinity for inositol polyphosphates. SPX domains may integrate inositol pyrophosphates (PP-InsP)-dependent signaling to adapt cytosolic phosphate concentrations to different metabolic situations.</text>
</comment>
<comment type="disruption phenotype">
    <text evidence="5">The VTC2 locus is refractory to knockout, and may be essential. Partial disruption of the gene results in reduced polyP accumulation.</text>
</comment>
<comment type="similarity">
    <text evidence="6">Belongs to the VTC2/3 family.</text>
</comment>
<gene>
    <name type="primary">vtc2</name>
    <name type="ORF">TGME49_298630</name>
</gene>
<reference key="1">
    <citation type="submission" date="2013-04" db="EMBL/GenBank/DDBJ databases">
        <authorList>
            <person name="Sibley D."/>
            <person name="Venepally P."/>
            <person name="Karamycheva S."/>
            <person name="Hadjithomas M."/>
            <person name="Khan A."/>
            <person name="Brunk B."/>
            <person name="Roos D."/>
            <person name="Caler E."/>
            <person name="Lorenzi H."/>
        </authorList>
    </citation>
    <scope>NUCLEOTIDE SEQUENCE [LARGE SCALE GENOMIC DNA]</scope>
    <source>
        <strain>ATCC 50611 / Me49</strain>
    </source>
</reference>
<reference key="2">
    <citation type="journal article" date="2012" name="BMC Genomics">
        <title>De novo reconstruction of the Toxoplasma gondii transcriptome improves on the current genome annotation and reveals alternatively spliced transcripts and putative long non-coding RNAs.</title>
        <authorList>
            <person name="Hassan M.A."/>
            <person name="Melo M.B."/>
            <person name="Haas B."/>
            <person name="Jensen K.D."/>
            <person name="Saeij J.P."/>
        </authorList>
    </citation>
    <scope>GENOME REANNOTATION</scope>
    <source>
        <strain>ATCC 50611 / Me49</strain>
    </source>
</reference>
<reference key="3">
    <citation type="journal article" date="2011" name="Mol. Biochem. Parasitol.">
        <title>TgVTC2 is involved in polyphosphate accumulation in Toxoplasma gondii.</title>
        <authorList>
            <person name="Rooney P.J."/>
            <person name="Ayong L."/>
            <person name="Tobin C.M."/>
            <person name="Moreno S.N."/>
            <person name="Knoll L.J."/>
        </authorList>
    </citation>
    <scope>SUBCELLULAR LOCATION</scope>
    <scope>DISRUPTION PHENOTYPE</scope>
</reference>
<organism>
    <name type="scientific">Toxoplasma gondii (strain ATCC 50611 / Me49)</name>
    <dbReference type="NCBI Taxonomy" id="508771"/>
    <lineage>
        <taxon>Eukaryota</taxon>
        <taxon>Sar</taxon>
        <taxon>Alveolata</taxon>
        <taxon>Apicomplexa</taxon>
        <taxon>Conoidasida</taxon>
        <taxon>Coccidia</taxon>
        <taxon>Eucoccidiorida</taxon>
        <taxon>Eimeriorina</taxon>
        <taxon>Sarcocystidae</taxon>
        <taxon>Toxoplasma</taxon>
    </lineage>
</organism>
<evidence type="ECO:0000250" key="1">
    <source>
        <dbReference type="UniProtKB" id="P43585"/>
    </source>
</evidence>
<evidence type="ECO:0000255" key="2"/>
<evidence type="ECO:0000255" key="3">
    <source>
        <dbReference type="PROSITE-ProRule" id="PRU00714"/>
    </source>
</evidence>
<evidence type="ECO:0000256" key="4">
    <source>
        <dbReference type="SAM" id="MobiDB-lite"/>
    </source>
</evidence>
<evidence type="ECO:0000269" key="5">
    <source>
    </source>
</evidence>
<evidence type="ECO:0000305" key="6"/>
<name>VTC2_TOXGM</name>
<dbReference type="EMBL" id="KE138838">
    <property type="protein sequence ID" value="EPT25491.1"/>
    <property type="molecule type" value="Genomic_DNA"/>
</dbReference>
<dbReference type="RefSeq" id="XP_002372055.1">
    <property type="nucleotide sequence ID" value="XM_002372014.2"/>
</dbReference>
<dbReference type="EnsemblProtists" id="TGME49_298630-t26_1">
    <property type="protein sequence ID" value="TGME49_298630-t26_1"/>
    <property type="gene ID" value="TGME49_298630"/>
</dbReference>
<dbReference type="GeneID" id="7898643"/>
<dbReference type="KEGG" id="tgo:TGME49_298630"/>
<dbReference type="VEuPathDB" id="ToxoDB:TGME49_298630"/>
<dbReference type="OrthoDB" id="2243669at2759"/>
<dbReference type="PhylomeDB" id="A0A125YS36"/>
<dbReference type="Proteomes" id="UP000001529">
    <property type="component" value="Chromosome XI"/>
</dbReference>
<dbReference type="GO" id="GO:0005774">
    <property type="term" value="C:vacuolar membrane"/>
    <property type="evidence" value="ECO:0007669"/>
    <property type="project" value="UniProtKB-SubCell"/>
</dbReference>
<dbReference type="GO" id="GO:0006799">
    <property type="term" value="P:polyphosphate biosynthetic process"/>
    <property type="evidence" value="ECO:0007669"/>
    <property type="project" value="UniProtKB-ARBA"/>
</dbReference>
<dbReference type="CDD" id="cd14447">
    <property type="entry name" value="SPX"/>
    <property type="match status" value="1"/>
</dbReference>
<dbReference type="Gene3D" id="3.20.100.30">
    <property type="entry name" value="VTC, catalytic tunnel domain"/>
    <property type="match status" value="1"/>
</dbReference>
<dbReference type="InterPro" id="IPR003807">
    <property type="entry name" value="DUF202"/>
</dbReference>
<dbReference type="InterPro" id="IPR004331">
    <property type="entry name" value="SPX_dom"/>
</dbReference>
<dbReference type="InterPro" id="IPR051572">
    <property type="entry name" value="VTC_Complex_Subunit"/>
</dbReference>
<dbReference type="InterPro" id="IPR018966">
    <property type="entry name" value="VTC_domain"/>
</dbReference>
<dbReference type="InterPro" id="IPR042267">
    <property type="entry name" value="VTC_sf"/>
</dbReference>
<dbReference type="PANTHER" id="PTHR46140">
    <property type="entry name" value="VACUOLAR TRANSPORTER CHAPERONE 1-RELATED"/>
    <property type="match status" value="1"/>
</dbReference>
<dbReference type="PANTHER" id="PTHR46140:SF1">
    <property type="entry name" value="VACUOLAR TRANSPORTER CHAPERONE COMPLEX SUBUNIT 4-RELATED"/>
    <property type="match status" value="1"/>
</dbReference>
<dbReference type="Pfam" id="PF02656">
    <property type="entry name" value="DUF202"/>
    <property type="match status" value="1"/>
</dbReference>
<dbReference type="Pfam" id="PF03105">
    <property type="entry name" value="SPX"/>
    <property type="match status" value="1"/>
</dbReference>
<dbReference type="Pfam" id="PF09359">
    <property type="entry name" value="VTC"/>
    <property type="match status" value="1"/>
</dbReference>
<dbReference type="PROSITE" id="PS51382">
    <property type="entry name" value="SPX"/>
    <property type="match status" value="1"/>
</dbReference>